<proteinExistence type="inferred from homology"/>
<protein>
    <recommendedName>
        <fullName evidence="1">Small ribosomal subunit protein uS2</fullName>
    </recommendedName>
    <alternativeName>
        <fullName evidence="2">40S ribosomal protein SA</fullName>
    </alternativeName>
</protein>
<name>RSSA_CRYHO</name>
<evidence type="ECO:0000255" key="1">
    <source>
        <dbReference type="HAMAP-Rule" id="MF_03015"/>
    </source>
</evidence>
<evidence type="ECO:0000305" key="2"/>
<sequence>MPPAETRKLDDIAKMIVCKTHIGTKNVEDKMLSYVYKRTHEGIFLINLAKTWEKIQIAARIIATIDNLADVVVVSQRPYGSRPALKFAQHTGAHAMVGRFTPGTLTNQITQKFMEPRLLIVTDPRVDSQAVIESSYANIPVIALCDTDSPLQYVDVAIPCNNKGKESIALMYYLLAREVNFLRGKTDKWDVMVDVFFWRDPEEYENSAIGADMELNDGMGVDIEGAAVDSAAAANEWGGVSGNWGGSAADEWRNAP</sequence>
<organism>
    <name type="scientific">Cryptosporidium hominis</name>
    <dbReference type="NCBI Taxonomy" id="237895"/>
    <lineage>
        <taxon>Eukaryota</taxon>
        <taxon>Sar</taxon>
        <taxon>Alveolata</taxon>
        <taxon>Apicomplexa</taxon>
        <taxon>Conoidasida</taxon>
        <taxon>Coccidia</taxon>
        <taxon>Eucoccidiorida</taxon>
        <taxon>Eimeriorina</taxon>
        <taxon>Cryptosporidiidae</taxon>
        <taxon>Cryptosporidium</taxon>
    </lineage>
</organism>
<feature type="chain" id="PRO_0000371604" description="Small ribosomal subunit protein uS2">
    <location>
        <begin position="1"/>
        <end position="256"/>
    </location>
</feature>
<reference key="1">
    <citation type="journal article" date="2004" name="Nature">
        <title>The genome of Cryptosporidium hominis.</title>
        <authorList>
            <person name="Xu P."/>
            <person name="Widmer G."/>
            <person name="Wang Y."/>
            <person name="Ozaki L.S."/>
            <person name="Alves J.M."/>
            <person name="Serrano M.G."/>
            <person name="Puiu D."/>
            <person name="Manque P."/>
            <person name="Akiyoshi D."/>
            <person name="Mackey A.J."/>
            <person name="Pearson W.R."/>
            <person name="Dear P.H."/>
            <person name="Bankier A.T."/>
            <person name="Peterson D.L."/>
            <person name="Abrahamsen M.S."/>
            <person name="Kapur V."/>
            <person name="Tzipori S."/>
            <person name="Buck G.A."/>
        </authorList>
    </citation>
    <scope>NUCLEOTIDE SEQUENCE [LARGE SCALE GENOMIC DNA]</scope>
    <source>
        <strain>TU502</strain>
    </source>
</reference>
<dbReference type="EMBL" id="AAEL01000001">
    <property type="protein sequence ID" value="EAL38453.1"/>
    <property type="molecule type" value="Genomic_DNA"/>
</dbReference>
<dbReference type="RefSeq" id="XP_668688.1">
    <property type="nucleotide sequence ID" value="XM_663596.1"/>
</dbReference>
<dbReference type="SMR" id="Q5CPC9"/>
<dbReference type="GeneID" id="3413531"/>
<dbReference type="KEGG" id="cho:Chro.30246"/>
<dbReference type="VEuPathDB" id="CryptoDB:Chro.30246"/>
<dbReference type="VEuPathDB" id="CryptoDB:ChTU502y2012_414g0040"/>
<dbReference type="VEuPathDB" id="CryptoDB:CHUDEA3_2090"/>
<dbReference type="VEuPathDB" id="CryptoDB:GY17_00002733"/>
<dbReference type="OrthoDB" id="414863at2759"/>
<dbReference type="GO" id="GO:0022627">
    <property type="term" value="C:cytosolic small ribosomal subunit"/>
    <property type="evidence" value="ECO:0007669"/>
    <property type="project" value="UniProtKB-UniRule"/>
</dbReference>
<dbReference type="GO" id="GO:0003735">
    <property type="term" value="F:structural constituent of ribosome"/>
    <property type="evidence" value="ECO:0007669"/>
    <property type="project" value="UniProtKB-UniRule"/>
</dbReference>
<dbReference type="GO" id="GO:0000028">
    <property type="term" value="P:ribosomal small subunit assembly"/>
    <property type="evidence" value="ECO:0007669"/>
    <property type="project" value="UniProtKB-UniRule"/>
</dbReference>
<dbReference type="GO" id="GO:0006412">
    <property type="term" value="P:translation"/>
    <property type="evidence" value="ECO:0007669"/>
    <property type="project" value="UniProtKB-UniRule"/>
</dbReference>
<dbReference type="CDD" id="cd01425">
    <property type="entry name" value="RPS2"/>
    <property type="match status" value="1"/>
</dbReference>
<dbReference type="FunFam" id="3.40.50.10490:FF:000012">
    <property type="entry name" value="40S ribosomal protein SA"/>
    <property type="match status" value="1"/>
</dbReference>
<dbReference type="Gene3D" id="3.40.50.10490">
    <property type="entry name" value="Glucose-6-phosphate isomerase like protein, domain 1"/>
    <property type="match status" value="1"/>
</dbReference>
<dbReference type="HAMAP" id="MF_03015">
    <property type="entry name" value="Ribosomal_S2_euk"/>
    <property type="match status" value="1"/>
</dbReference>
<dbReference type="InterPro" id="IPR001865">
    <property type="entry name" value="Ribosomal_uS2"/>
</dbReference>
<dbReference type="InterPro" id="IPR018130">
    <property type="entry name" value="Ribosomal_uS2_CS"/>
</dbReference>
<dbReference type="InterPro" id="IPR027498">
    <property type="entry name" value="Ribosomal_uS2_euk"/>
</dbReference>
<dbReference type="InterPro" id="IPR005707">
    <property type="entry name" value="Ribosomal_uS2_euk/arc"/>
</dbReference>
<dbReference type="InterPro" id="IPR023591">
    <property type="entry name" value="Ribosomal_uS2_flav_dom_sf"/>
</dbReference>
<dbReference type="NCBIfam" id="TIGR01012">
    <property type="entry name" value="uS2_euk_arch"/>
    <property type="match status" value="1"/>
</dbReference>
<dbReference type="PANTHER" id="PTHR11489">
    <property type="entry name" value="40S RIBOSOMAL PROTEIN SA"/>
    <property type="match status" value="1"/>
</dbReference>
<dbReference type="Pfam" id="PF00318">
    <property type="entry name" value="Ribosomal_S2"/>
    <property type="match status" value="2"/>
</dbReference>
<dbReference type="PRINTS" id="PR00395">
    <property type="entry name" value="RIBOSOMALS2"/>
</dbReference>
<dbReference type="SUPFAM" id="SSF52313">
    <property type="entry name" value="Ribosomal protein S2"/>
    <property type="match status" value="1"/>
</dbReference>
<dbReference type="PROSITE" id="PS00962">
    <property type="entry name" value="RIBOSOMAL_S2_1"/>
    <property type="match status" value="1"/>
</dbReference>
<dbReference type="PROSITE" id="PS00963">
    <property type="entry name" value="RIBOSOMAL_S2_2"/>
    <property type="match status" value="1"/>
</dbReference>
<comment type="function">
    <text evidence="1">Required for the assembly and/or stability of the 40S ribosomal subunit. Required for the processing of the 20S rRNA-precursor to mature 18S rRNA in a late step of the maturation of 40S ribosomal subunits.</text>
</comment>
<comment type="subunit">
    <text evidence="1">Component of the small ribosomal subunit. Mature ribosomes consist of a small (40S) and a large (60S) subunit. The 40S subunit contains about 33 different proteins and 1 molecule of RNA (18S). The 60S subunit contains about 49 different proteins and 3 molecules of RNA (25S, 5.8S and 5S). Interacts with ribosomal protein S21.</text>
</comment>
<comment type="subcellular location">
    <subcellularLocation>
        <location evidence="1">Cytoplasm</location>
    </subcellularLocation>
</comment>
<comment type="similarity">
    <text evidence="1">Belongs to the universal ribosomal protein uS2 family.</text>
</comment>
<accession>Q5CPC9</accession>
<keyword id="KW-0963">Cytoplasm</keyword>
<keyword id="KW-0687">Ribonucleoprotein</keyword>
<keyword id="KW-0689">Ribosomal protein</keyword>
<gene>
    <name type="ORF">Chro.30246</name>
</gene>